<protein>
    <recommendedName>
        <fullName evidence="2">Amine oxidase [copper-containing] 3</fullName>
        <ecNumber evidence="2">1.4.3.21</ecNumber>
    </recommendedName>
    <alternativeName>
        <fullName evidence="7">Amine oxidase copper-containing 3</fullName>
    </alternativeName>
    <alternativeName>
        <fullName>Copper amine oxidase</fullName>
    </alternativeName>
    <alternativeName>
        <fullName>Semicarbazide-sensitive amine oxidase</fullName>
        <shortName>SSAO</shortName>
    </alternativeName>
    <alternativeName>
        <fullName evidence="5">Vascular adhesion protein 1</fullName>
        <shortName evidence="5">VAP-1</shortName>
    </alternativeName>
</protein>
<evidence type="ECO:0000250" key="1">
    <source>
        <dbReference type="UniProtKB" id="P19801"/>
    </source>
</evidence>
<evidence type="ECO:0000250" key="2">
    <source>
        <dbReference type="UniProtKB" id="Q16853"/>
    </source>
</evidence>
<evidence type="ECO:0000255" key="3"/>
<evidence type="ECO:0000303" key="4">
    <source>
    </source>
</evidence>
<evidence type="ECO:0000303" key="5">
    <source>
    </source>
</evidence>
<evidence type="ECO:0000305" key="6"/>
<evidence type="ECO:0000312" key="7">
    <source>
        <dbReference type="MGI" id="MGI:1306797"/>
    </source>
</evidence>
<accession>O70423</accession>
<accession>A2A4I7</accession>
<accession>Q66JM4</accession>
<accession>Q9R055</accession>
<proteinExistence type="evidence at protein level"/>
<gene>
    <name evidence="7" type="primary">Aoc3</name>
    <name type="synonym">Vap1</name>
</gene>
<dbReference type="EC" id="1.4.3.21" evidence="2"/>
<dbReference type="EMBL" id="AF054831">
    <property type="protein sequence ID" value="AAC23747.1"/>
    <property type="molecule type" value="mRNA"/>
</dbReference>
<dbReference type="EMBL" id="AF078705">
    <property type="protein sequence ID" value="AAC35839.1"/>
    <property type="molecule type" value="Genomic_DNA"/>
</dbReference>
<dbReference type="EMBL" id="AF115411">
    <property type="protein sequence ID" value="AAD09199.1"/>
    <property type="molecule type" value="mRNA"/>
</dbReference>
<dbReference type="EMBL" id="AL590969">
    <property type="status" value="NOT_ANNOTATED_CDS"/>
    <property type="molecule type" value="Genomic_DNA"/>
</dbReference>
<dbReference type="EMBL" id="BC080857">
    <property type="protein sequence ID" value="AAH80857.1"/>
    <property type="molecule type" value="mRNA"/>
</dbReference>
<dbReference type="CCDS" id="CCDS25465.1">
    <molecule id="O70423-1"/>
</dbReference>
<dbReference type="RefSeq" id="NP_033805.1">
    <molecule id="O70423-1"/>
    <property type="nucleotide sequence ID" value="NM_009675.2"/>
</dbReference>
<dbReference type="SMR" id="O70423"/>
<dbReference type="BioGRID" id="198116">
    <property type="interactions" value="1"/>
</dbReference>
<dbReference type="FunCoup" id="O70423">
    <property type="interactions" value="464"/>
</dbReference>
<dbReference type="IntAct" id="O70423">
    <property type="interactions" value="1"/>
</dbReference>
<dbReference type="STRING" id="10090.ENSMUSP00000099394"/>
<dbReference type="BindingDB" id="O70423"/>
<dbReference type="ChEMBL" id="CHEMBL4727"/>
<dbReference type="GlyCosmos" id="O70423">
    <property type="glycosylation" value="7 sites, No reported glycans"/>
</dbReference>
<dbReference type="GlyGen" id="O70423">
    <property type="glycosylation" value="7 sites, 2 N-linked glycans (2 sites), 1 O-linked glycan (1 site)"/>
</dbReference>
<dbReference type="iPTMnet" id="O70423"/>
<dbReference type="PhosphoSitePlus" id="O70423"/>
<dbReference type="SwissPalm" id="O70423"/>
<dbReference type="jPOST" id="O70423"/>
<dbReference type="PaxDb" id="10090-ENSMUSP00000099394"/>
<dbReference type="PeptideAtlas" id="O70423"/>
<dbReference type="ProteomicsDB" id="296321">
    <molecule id="O70423-1"/>
</dbReference>
<dbReference type="ProteomicsDB" id="296322">
    <molecule id="O70423-2"/>
</dbReference>
<dbReference type="Pumba" id="O70423"/>
<dbReference type="Antibodypedia" id="611">
    <property type="antibodies" value="485 antibodies from 39 providers"/>
</dbReference>
<dbReference type="DNASU" id="11754"/>
<dbReference type="Ensembl" id="ENSMUST00000103105.10">
    <molecule id="O70423-1"/>
    <property type="protein sequence ID" value="ENSMUSP00000099394.4"/>
    <property type="gene ID" value="ENSMUSG00000019326.15"/>
</dbReference>
<dbReference type="GeneID" id="11754"/>
<dbReference type="KEGG" id="mmu:11754"/>
<dbReference type="UCSC" id="uc007lop.2">
    <molecule id="O70423-1"/>
    <property type="organism name" value="mouse"/>
</dbReference>
<dbReference type="AGR" id="MGI:1306797"/>
<dbReference type="CTD" id="8639"/>
<dbReference type="MGI" id="MGI:1306797">
    <property type="gene designation" value="Aoc3"/>
</dbReference>
<dbReference type="VEuPathDB" id="HostDB:ENSMUSG00000019326"/>
<dbReference type="eggNOG" id="KOG1186">
    <property type="taxonomic scope" value="Eukaryota"/>
</dbReference>
<dbReference type="GeneTree" id="ENSGT00950000183207"/>
<dbReference type="HOGENOM" id="CLU_015739_1_0_1"/>
<dbReference type="InParanoid" id="O70423"/>
<dbReference type="OMA" id="CMFEIDK"/>
<dbReference type="OrthoDB" id="5379943at2759"/>
<dbReference type="PhylomeDB" id="O70423"/>
<dbReference type="TreeFam" id="TF314750"/>
<dbReference type="Reactome" id="R-MMU-211945">
    <property type="pathway name" value="Phase I - Functionalization of compounds"/>
</dbReference>
<dbReference type="BioGRID-ORCS" id="11754">
    <property type="hits" value="2 hits in 76 CRISPR screens"/>
</dbReference>
<dbReference type="ChiTaRS" id="Aoc3">
    <property type="organism name" value="mouse"/>
</dbReference>
<dbReference type="PRO" id="PR:O70423"/>
<dbReference type="Proteomes" id="UP000000589">
    <property type="component" value="Chromosome 11"/>
</dbReference>
<dbReference type="RNAct" id="O70423">
    <property type="molecule type" value="protein"/>
</dbReference>
<dbReference type="Bgee" id="ENSMUSG00000019326">
    <property type="expression patterns" value="Expressed in epididymal fat pad and 127 other cell types or tissues"/>
</dbReference>
<dbReference type="ExpressionAtlas" id="O70423">
    <property type="expression patterns" value="baseline and differential"/>
</dbReference>
<dbReference type="GO" id="GO:0009986">
    <property type="term" value="C:cell surface"/>
    <property type="evidence" value="ECO:0000250"/>
    <property type="project" value="UniProtKB"/>
</dbReference>
<dbReference type="GO" id="GO:0005769">
    <property type="term" value="C:early endosome"/>
    <property type="evidence" value="ECO:0007669"/>
    <property type="project" value="Ensembl"/>
</dbReference>
<dbReference type="GO" id="GO:0005783">
    <property type="term" value="C:endoplasmic reticulum"/>
    <property type="evidence" value="ECO:0007669"/>
    <property type="project" value="Ensembl"/>
</dbReference>
<dbReference type="GO" id="GO:0005794">
    <property type="term" value="C:Golgi apparatus"/>
    <property type="evidence" value="ECO:0007669"/>
    <property type="project" value="Ensembl"/>
</dbReference>
<dbReference type="GO" id="GO:0016020">
    <property type="term" value="C:membrane"/>
    <property type="evidence" value="ECO:0000250"/>
    <property type="project" value="UniProtKB"/>
</dbReference>
<dbReference type="GO" id="GO:0005902">
    <property type="term" value="C:microvillus"/>
    <property type="evidence" value="ECO:0007669"/>
    <property type="project" value="Ensembl"/>
</dbReference>
<dbReference type="GO" id="GO:0005886">
    <property type="term" value="C:plasma membrane"/>
    <property type="evidence" value="ECO:0000250"/>
    <property type="project" value="UniProtKB"/>
</dbReference>
<dbReference type="GO" id="GO:0005509">
    <property type="term" value="F:calcium ion binding"/>
    <property type="evidence" value="ECO:0007669"/>
    <property type="project" value="Ensembl"/>
</dbReference>
<dbReference type="GO" id="GO:0005507">
    <property type="term" value="F:copper ion binding"/>
    <property type="evidence" value="ECO:0007669"/>
    <property type="project" value="Ensembl"/>
</dbReference>
<dbReference type="GO" id="GO:0042802">
    <property type="term" value="F:identical protein binding"/>
    <property type="evidence" value="ECO:0007669"/>
    <property type="project" value="Ensembl"/>
</dbReference>
<dbReference type="GO" id="GO:0008131">
    <property type="term" value="F:primary methylamine oxidase activity"/>
    <property type="evidence" value="ECO:0000250"/>
    <property type="project" value="UniProtKB"/>
</dbReference>
<dbReference type="GO" id="GO:0046982">
    <property type="term" value="F:protein heterodimerization activity"/>
    <property type="evidence" value="ECO:0007669"/>
    <property type="project" value="Ensembl"/>
</dbReference>
<dbReference type="GO" id="GO:0048038">
    <property type="term" value="F:quinone binding"/>
    <property type="evidence" value="ECO:0000250"/>
    <property type="project" value="UniProtKB"/>
</dbReference>
<dbReference type="GO" id="GO:0009308">
    <property type="term" value="P:amine metabolic process"/>
    <property type="evidence" value="ECO:0000250"/>
    <property type="project" value="UniProtKB"/>
</dbReference>
<dbReference type="GO" id="GO:0007155">
    <property type="term" value="P:cell adhesion"/>
    <property type="evidence" value="ECO:0000250"/>
    <property type="project" value="UniProtKB"/>
</dbReference>
<dbReference type="FunFam" id="2.70.98.20:FF:000003">
    <property type="entry name" value="Amine oxidase"/>
    <property type="match status" value="1"/>
</dbReference>
<dbReference type="FunFam" id="3.10.450.40:FF:000001">
    <property type="entry name" value="Amine oxidase"/>
    <property type="match status" value="1"/>
</dbReference>
<dbReference type="FunFam" id="3.10.450.40:FF:000003">
    <property type="entry name" value="Amine oxidase"/>
    <property type="match status" value="1"/>
</dbReference>
<dbReference type="Gene3D" id="3.10.450.40">
    <property type="match status" value="2"/>
</dbReference>
<dbReference type="Gene3D" id="2.70.98.20">
    <property type="entry name" value="Copper amine oxidase, catalytic domain"/>
    <property type="match status" value="1"/>
</dbReference>
<dbReference type="InterPro" id="IPR049947">
    <property type="entry name" value="Cu_Am_Ox_Cu-bd"/>
</dbReference>
<dbReference type="InterPro" id="IPR049948">
    <property type="entry name" value="Cu_Am_ox_TPQ-bd"/>
</dbReference>
<dbReference type="InterPro" id="IPR000269">
    <property type="entry name" value="Cu_amine_oxidase"/>
</dbReference>
<dbReference type="InterPro" id="IPR015798">
    <property type="entry name" value="Cu_amine_oxidase_C"/>
</dbReference>
<dbReference type="InterPro" id="IPR036460">
    <property type="entry name" value="Cu_amine_oxidase_C_sf"/>
</dbReference>
<dbReference type="InterPro" id="IPR016182">
    <property type="entry name" value="Cu_amine_oxidase_N-reg"/>
</dbReference>
<dbReference type="InterPro" id="IPR015800">
    <property type="entry name" value="Cu_amine_oxidase_N2"/>
</dbReference>
<dbReference type="InterPro" id="IPR015802">
    <property type="entry name" value="Cu_amine_oxidase_N3"/>
</dbReference>
<dbReference type="PANTHER" id="PTHR10638">
    <property type="entry name" value="COPPER AMINE OXIDASE"/>
    <property type="match status" value="1"/>
</dbReference>
<dbReference type="PANTHER" id="PTHR10638:SF23">
    <property type="entry name" value="MEMBRANE PRIMARY AMINE OXIDASE"/>
    <property type="match status" value="1"/>
</dbReference>
<dbReference type="Pfam" id="PF01179">
    <property type="entry name" value="Cu_amine_oxid"/>
    <property type="match status" value="1"/>
</dbReference>
<dbReference type="Pfam" id="PF02727">
    <property type="entry name" value="Cu_amine_oxidN2"/>
    <property type="match status" value="1"/>
</dbReference>
<dbReference type="Pfam" id="PF02728">
    <property type="entry name" value="Cu_amine_oxidN3"/>
    <property type="match status" value="1"/>
</dbReference>
<dbReference type="PRINTS" id="PR00766">
    <property type="entry name" value="CUDAOXIDASE"/>
</dbReference>
<dbReference type="SUPFAM" id="SSF49998">
    <property type="entry name" value="Amine oxidase catalytic domain"/>
    <property type="match status" value="1"/>
</dbReference>
<dbReference type="SUPFAM" id="SSF54416">
    <property type="entry name" value="Amine oxidase N-terminal region"/>
    <property type="match status" value="2"/>
</dbReference>
<dbReference type="PROSITE" id="PS01164">
    <property type="entry name" value="COPPER_AMINE_OXID_1"/>
    <property type="match status" value="1"/>
</dbReference>
<dbReference type="PROSITE" id="PS01165">
    <property type="entry name" value="COPPER_AMINE_OXID_2"/>
    <property type="match status" value="1"/>
</dbReference>
<keyword id="KW-0025">Alternative splicing</keyword>
<keyword id="KW-0106">Calcium</keyword>
<keyword id="KW-0130">Cell adhesion</keyword>
<keyword id="KW-1003">Cell membrane</keyword>
<keyword id="KW-0186">Copper</keyword>
<keyword id="KW-1015">Disulfide bond</keyword>
<keyword id="KW-0325">Glycoprotein</keyword>
<keyword id="KW-0472">Membrane</keyword>
<keyword id="KW-0479">Metal-binding</keyword>
<keyword id="KW-0560">Oxidoreductase</keyword>
<keyword id="KW-1185">Reference proteome</keyword>
<keyword id="KW-0735">Signal-anchor</keyword>
<keyword id="KW-0801">TPQ</keyword>
<keyword id="KW-0812">Transmembrane</keyword>
<keyword id="KW-1133">Transmembrane helix</keyword>
<comment type="function">
    <text evidence="2">Catalyzes the oxidative deamination of primary amines to the corresponding aldehydes with the concomitant production of hydrogen peroxide and ammonia. Has a preference for the primary monoamines methylamine and benzylamine. Could also act on 2-phenylethylamine but much less efficiently. At endothelial cells surface can also function as a cell adhesion protein that participates in lymphocyte extravasation and recirculation by mediating the binding of lymphocytes to peripheral lymph node vascular endothelial cells in an L-selectin-independent fashion.</text>
</comment>
<comment type="catalytic activity">
    <reaction evidence="2">
        <text>methylamine + O2 + H2O = formaldehyde + H2O2 + NH4(+)</text>
        <dbReference type="Rhea" id="RHEA:59420"/>
        <dbReference type="ChEBI" id="CHEBI:15377"/>
        <dbReference type="ChEBI" id="CHEBI:15379"/>
        <dbReference type="ChEBI" id="CHEBI:16240"/>
        <dbReference type="ChEBI" id="CHEBI:16842"/>
        <dbReference type="ChEBI" id="CHEBI:28938"/>
        <dbReference type="ChEBI" id="CHEBI:59338"/>
    </reaction>
    <physiologicalReaction direction="left-to-right" evidence="2">
        <dbReference type="Rhea" id="RHEA:59421"/>
    </physiologicalReaction>
</comment>
<comment type="catalytic activity">
    <reaction evidence="2">
        <text>benzylamine + O2 + H2O = benzaldehyde + H2O2 + NH4(+)</text>
        <dbReference type="Rhea" id="RHEA:59424"/>
        <dbReference type="ChEBI" id="CHEBI:15377"/>
        <dbReference type="ChEBI" id="CHEBI:15379"/>
        <dbReference type="ChEBI" id="CHEBI:16240"/>
        <dbReference type="ChEBI" id="CHEBI:17169"/>
        <dbReference type="ChEBI" id="CHEBI:28938"/>
        <dbReference type="ChEBI" id="CHEBI:225238"/>
    </reaction>
    <physiologicalReaction direction="left-to-right" evidence="2">
        <dbReference type="Rhea" id="RHEA:59425"/>
    </physiologicalReaction>
</comment>
<comment type="catalytic activity">
    <reaction evidence="2">
        <text>2-phenylethylamine + O2 + H2O = 2-phenylacetaldehyde + H2O2 + NH4(+)</text>
        <dbReference type="Rhea" id="RHEA:25265"/>
        <dbReference type="ChEBI" id="CHEBI:15377"/>
        <dbReference type="ChEBI" id="CHEBI:15379"/>
        <dbReference type="ChEBI" id="CHEBI:16240"/>
        <dbReference type="ChEBI" id="CHEBI:16424"/>
        <dbReference type="ChEBI" id="CHEBI:28938"/>
        <dbReference type="ChEBI" id="CHEBI:225237"/>
        <dbReference type="EC" id="1.4.3.21"/>
    </reaction>
    <physiologicalReaction direction="left-to-right" evidence="2">
        <dbReference type="Rhea" id="RHEA:25266"/>
    </physiologicalReaction>
</comment>
<comment type="cofactor">
    <cofactor evidence="2">
        <name>Cu(2+)</name>
        <dbReference type="ChEBI" id="CHEBI:29036"/>
    </cofactor>
    <text evidence="2">Binds 1 copper ion per subunit.</text>
</comment>
<comment type="cofactor">
    <cofactor evidence="2">
        <name>Ca(2+)</name>
        <dbReference type="ChEBI" id="CHEBI:29108"/>
    </cofactor>
    <text evidence="2">Binds 2 calcium ions per subunit.</text>
</comment>
<comment type="cofactor">
    <cofactor evidence="2">
        <name>L-topaquinone</name>
        <dbReference type="ChEBI" id="CHEBI:79027"/>
    </cofactor>
    <text evidence="2">Contains 1 topaquinone per subunit.</text>
</comment>
<comment type="subunit">
    <text evidence="2">Homodimer; disulfide-linked. Probably forms heterodimers with AOC2.</text>
</comment>
<comment type="subcellular location">
    <subcellularLocation>
        <location evidence="2">Cell membrane</location>
        <topology evidence="2">Single-pass type II membrane protein</topology>
    </subcellularLocation>
</comment>
<comment type="alternative products">
    <event type="alternative splicing"/>
    <isoform>
        <id>O70423-1</id>
        <name>1</name>
        <sequence type="displayed"/>
    </isoform>
    <isoform>
        <id>O70423-2</id>
        <name>2</name>
        <sequence type="described" ref="VSP_016604"/>
    </isoform>
</comment>
<comment type="PTM">
    <text evidence="2">Topaquinone (TPQ) is generated by copper-dependent autoxidation of a specific tyrosyl residue.</text>
</comment>
<comment type="PTM">
    <text evidence="2">N- and O-glycosylated.</text>
</comment>
<comment type="similarity">
    <text evidence="6">Belongs to the copper/topaquinone oxidase family.</text>
</comment>
<organism>
    <name type="scientific">Mus musculus</name>
    <name type="common">Mouse</name>
    <dbReference type="NCBI Taxonomy" id="10090"/>
    <lineage>
        <taxon>Eukaryota</taxon>
        <taxon>Metazoa</taxon>
        <taxon>Chordata</taxon>
        <taxon>Craniata</taxon>
        <taxon>Vertebrata</taxon>
        <taxon>Euteleostomi</taxon>
        <taxon>Mammalia</taxon>
        <taxon>Eutheria</taxon>
        <taxon>Euarchontoglires</taxon>
        <taxon>Glires</taxon>
        <taxon>Rodentia</taxon>
        <taxon>Myomorpha</taxon>
        <taxon>Muroidea</taxon>
        <taxon>Muridae</taxon>
        <taxon>Murinae</taxon>
        <taxon>Mus</taxon>
        <taxon>Mus</taxon>
    </lineage>
</organism>
<feature type="chain" id="PRO_0000064103" description="Amine oxidase [copper-containing] 3">
    <location>
        <begin position="1"/>
        <end position="765"/>
    </location>
</feature>
<feature type="topological domain" description="Cytoplasmic" evidence="3">
    <location>
        <begin position="1"/>
        <end position="6"/>
    </location>
</feature>
<feature type="transmembrane region" description="Helical; Signal-anchor for type II membrane protein" evidence="3">
    <location>
        <begin position="7"/>
        <end position="27"/>
    </location>
</feature>
<feature type="topological domain" description="Extracellular" evidence="3">
    <location>
        <begin position="28"/>
        <end position="765"/>
    </location>
</feature>
<feature type="active site" description="Proton acceptor" evidence="1">
    <location>
        <position position="386"/>
    </location>
</feature>
<feature type="active site" description="Schiff-base intermediate with substrate; via topaquinone" evidence="2">
    <location>
        <position position="471"/>
    </location>
</feature>
<feature type="binding site" evidence="2">
    <location>
        <position position="520"/>
    </location>
    <ligand>
        <name>Cu(2+)</name>
        <dbReference type="ChEBI" id="CHEBI:29036"/>
    </ligand>
</feature>
<feature type="binding site" evidence="2">
    <location>
        <position position="522"/>
    </location>
    <ligand>
        <name>Cu(2+)</name>
        <dbReference type="ChEBI" id="CHEBI:29036"/>
    </ligand>
</feature>
<feature type="binding site" evidence="2">
    <location>
        <position position="529"/>
    </location>
    <ligand>
        <name>Ca(2+)</name>
        <dbReference type="ChEBI" id="CHEBI:29108"/>
        <label>1</label>
    </ligand>
</feature>
<feature type="binding site" evidence="2">
    <location>
        <position position="530"/>
    </location>
    <ligand>
        <name>Ca(2+)</name>
        <dbReference type="ChEBI" id="CHEBI:29108"/>
        <label>1</label>
    </ligand>
</feature>
<feature type="binding site" evidence="2">
    <location>
        <position position="531"/>
    </location>
    <ligand>
        <name>Ca(2+)</name>
        <dbReference type="ChEBI" id="CHEBI:29108"/>
        <label>1</label>
    </ligand>
</feature>
<feature type="binding site" evidence="2">
    <location>
        <position position="572"/>
    </location>
    <ligand>
        <name>Ca(2+)</name>
        <dbReference type="ChEBI" id="CHEBI:29108"/>
        <label>2</label>
    </ligand>
</feature>
<feature type="binding site" evidence="2">
    <location>
        <position position="641"/>
    </location>
    <ligand>
        <name>Ca(2+)</name>
        <dbReference type="ChEBI" id="CHEBI:29108"/>
        <label>2</label>
    </ligand>
</feature>
<feature type="binding site" evidence="2">
    <location>
        <position position="663"/>
    </location>
    <ligand>
        <name>Ca(2+)</name>
        <dbReference type="ChEBI" id="CHEBI:29108"/>
        <label>2</label>
    </ligand>
</feature>
<feature type="binding site" evidence="2">
    <location>
        <position position="667"/>
    </location>
    <ligand>
        <name>Ca(2+)</name>
        <dbReference type="ChEBI" id="CHEBI:29108"/>
        <label>2</label>
    </ligand>
</feature>
<feature type="binding site" evidence="2">
    <location>
        <position position="673"/>
    </location>
    <ligand>
        <name>Ca(2+)</name>
        <dbReference type="ChEBI" id="CHEBI:29108"/>
        <label>1</label>
    </ligand>
</feature>
<feature type="binding site" evidence="2">
    <location>
        <position position="674"/>
    </location>
    <ligand>
        <name>Ca(2+)</name>
        <dbReference type="ChEBI" id="CHEBI:29108"/>
        <label>1</label>
    </ligand>
</feature>
<feature type="binding site" evidence="2">
    <location>
        <position position="684"/>
    </location>
    <ligand>
        <name>Cu(2+)</name>
        <dbReference type="ChEBI" id="CHEBI:29036"/>
    </ligand>
</feature>
<feature type="modified residue" description="2',4',5'-topaquinone" evidence="2">
    <location>
        <position position="471"/>
    </location>
</feature>
<feature type="glycosylation site" description="N-linked (GlcNAc...) asparagine" evidence="3">
    <location>
        <position position="137"/>
    </location>
</feature>
<feature type="glycosylation site" description="N-linked (GlcNAc...) asparagine" evidence="3">
    <location>
        <position position="232"/>
    </location>
</feature>
<feature type="glycosylation site" description="N-linked (GlcNAc...) asparagine" evidence="3">
    <location>
        <position position="294"/>
    </location>
</feature>
<feature type="glycosylation site" description="N-linked (GlcNAc...) asparagine" evidence="3">
    <location>
        <position position="592"/>
    </location>
</feature>
<feature type="glycosylation site" description="N-linked (GlcNAc...) asparagine" evidence="3">
    <location>
        <position position="659"/>
    </location>
</feature>
<feature type="glycosylation site" description="N-linked (GlcNAc...) asparagine" evidence="3">
    <location>
        <position position="666"/>
    </location>
</feature>
<feature type="disulfide bond" evidence="2">
    <location>
        <begin position="198"/>
        <end position="199"/>
    </location>
</feature>
<feature type="disulfide bond" evidence="2">
    <location>
        <begin position="404"/>
        <end position="430"/>
    </location>
</feature>
<feature type="disulfide bond" evidence="2">
    <location>
        <begin position="734"/>
        <end position="741"/>
    </location>
</feature>
<feature type="disulfide bond" description="Interchain" evidence="2">
    <location>
        <position position="748"/>
    </location>
</feature>
<feature type="splice variant" id="VSP_016604" description="In isoform 2." evidence="4">
    <location>
        <begin position="630"/>
        <end position="765"/>
    </location>
</feature>
<feature type="sequence conflict" description="In Ref. 2; AAD09199." evidence="6" ref="2">
    <original>N</original>
    <variation>D</variation>
    <location>
        <position position="659"/>
    </location>
</feature>
<sequence>MTQKTTLVLLALAVITIFALVCVLLAGRSGDGGGLSQPLHCPSVLPSVQPRTHPSQSQPFADLSPEELTAVMSFLTKHLGPGLVDAAQARPSDNCVFSVELQLPAKAAALAHLDRGGPPPVREALAIIFFGGQPKPNVSELVVGPLPHPSYMRDVTVERHGGPLPYYRRPVLDREYQDIEEMIFHRELPQASGLLHHCCFYKHQGQNLLTMTTAPRGLQSGDRATWFGLYYNLSGAGFYPHPIGLELLIDHKALDPALWTIQKVFYQGRYYESLTQLEDQFEAGLVNVVLVPNNGTGGSWSLKSSVPPGPAPPLQFHPQGPRFSVQGSQVSSSLWAFSFGLGAFSGPRIFDIRFQGERVAYEISVQEAIALYGGNSPASMSTCYVDGSFGIGKYSTPLIRGVDCPYLATYVDWHFLLESQAPKTLRDAFCVFEQNQGLPLRRHHSDFYSHYFGGVVGTVLVVRSVSTLLNYDYIWDMVFHPNGAIEVKFHATGYISSAFFFGAGEKFGNRVGAHTLGTVHTHSAHFKVDLDVAGLKNWAWAEDMAFVPTIVPWQPEYQMQRLQVTRKLLETEEEAAFPLGGATPRYLYLASNHSNKWGHRRGYRIQILSFAGKPLPQESPIEKAFTWGRYHLAVTQRKEEEPSSSSIFNQNDPWTPTVNFTDFISNETIAGEDLVAWVTAGFLHIPHAEDIPNTVTAGNSVGFFLRPYNFFDEDPSFHSADSIYFREGQDATACEVNPLACLSQTATCAPEIPAFSHGGFAYRDN</sequence>
<name>AOC3_MOUSE</name>
<reference key="1">
    <citation type="journal article" date="1998" name="J. Immunol.">
        <title>Isolation, structural characterization, and chromosomal mapping of the mouse vascular adhesion protein-1 gene and promoter.</title>
        <authorList>
            <person name="Bono P."/>
            <person name="Salmi M."/>
            <person name="Smith D.J."/>
            <person name="Leppanen I."/>
            <person name="Horelli-Kuitunen N."/>
            <person name="Palotie A."/>
            <person name="Jalkanen S."/>
        </authorList>
    </citation>
    <scope>NUCLEOTIDE SEQUENCE [GENOMIC DNA / MRNA] (ISOFORM 1)</scope>
    <source>
        <strain>129/SvJ</strain>
        <strain>BALB/cJ</strain>
    </source>
</reference>
<reference key="2">
    <citation type="journal article" date="1999" name="J. Biol. Chem.">
        <title>Molecular cloning of a major mRNA species in murine 3T3 adipocyte lineage. differentiation-dependent expression, regulation, and identification as semicarbazide-sensitive amine oxidase.</title>
        <authorList>
            <person name="Moldes M."/>
            <person name="Feve B."/>
            <person name="Pairault J."/>
        </authorList>
    </citation>
    <scope>NUCLEOTIDE SEQUENCE [MRNA] (ISOFORM 1)</scope>
</reference>
<reference key="3">
    <citation type="journal article" date="2009" name="PLoS Biol.">
        <title>Lineage-specific biology revealed by a finished genome assembly of the mouse.</title>
        <authorList>
            <person name="Church D.M."/>
            <person name="Goodstadt L."/>
            <person name="Hillier L.W."/>
            <person name="Zody M.C."/>
            <person name="Goldstein S."/>
            <person name="She X."/>
            <person name="Bult C.J."/>
            <person name="Agarwala R."/>
            <person name="Cherry J.L."/>
            <person name="DiCuccio M."/>
            <person name="Hlavina W."/>
            <person name="Kapustin Y."/>
            <person name="Meric P."/>
            <person name="Maglott D."/>
            <person name="Birtle Z."/>
            <person name="Marques A.C."/>
            <person name="Graves T."/>
            <person name="Zhou S."/>
            <person name="Teague B."/>
            <person name="Potamousis K."/>
            <person name="Churas C."/>
            <person name="Place M."/>
            <person name="Herschleb J."/>
            <person name="Runnheim R."/>
            <person name="Forrest D."/>
            <person name="Amos-Landgraf J."/>
            <person name="Schwartz D.C."/>
            <person name="Cheng Z."/>
            <person name="Lindblad-Toh K."/>
            <person name="Eichler E.E."/>
            <person name="Ponting C.P."/>
        </authorList>
    </citation>
    <scope>NUCLEOTIDE SEQUENCE [LARGE SCALE GENOMIC DNA]</scope>
    <source>
        <strain>C57BL/6J</strain>
    </source>
</reference>
<reference key="4">
    <citation type="journal article" date="2004" name="Genome Res.">
        <title>The status, quality, and expansion of the NIH full-length cDNA project: the Mammalian Gene Collection (MGC).</title>
        <authorList>
            <consortium name="The MGC Project Team"/>
        </authorList>
    </citation>
    <scope>NUCLEOTIDE SEQUENCE [LARGE SCALE MRNA] (ISOFORM 2)</scope>
    <source>
        <strain>C57BL/6J</strain>
        <tissue>Brain</tissue>
    </source>
</reference>
<reference key="5">
    <citation type="journal article" date="2010" name="Cell">
        <title>A tissue-specific atlas of mouse protein phosphorylation and expression.</title>
        <authorList>
            <person name="Huttlin E.L."/>
            <person name="Jedrychowski M.P."/>
            <person name="Elias J.E."/>
            <person name="Goswami T."/>
            <person name="Rad R."/>
            <person name="Beausoleil S.A."/>
            <person name="Villen J."/>
            <person name="Haas W."/>
            <person name="Sowa M.E."/>
            <person name="Gygi S.P."/>
        </authorList>
    </citation>
    <scope>IDENTIFICATION BY MASS SPECTROMETRY [LARGE SCALE ANALYSIS]</scope>
    <source>
        <tissue>Brown adipose tissue</tissue>
        <tissue>Heart</tissue>
        <tissue>Kidney</tissue>
        <tissue>Lung</tissue>
        <tissue>Pancreas</tissue>
        <tissue>Spleen</tissue>
        <tissue>Testis</tissue>
    </source>
</reference>